<gene>
    <name evidence="1" type="primary">rpl40e</name>
    <name type="ordered locus">MMP0151</name>
</gene>
<sequence>MAFEEAIKRVFMKKICMKCNSRNSWKATKCRKCGYTNLRPKAKEARA</sequence>
<protein>
    <recommendedName>
        <fullName evidence="1">Large ribosomal subunit protein eL40</fullName>
    </recommendedName>
    <alternativeName>
        <fullName evidence="2">50S ribosomal protein L40e</fullName>
    </alternativeName>
</protein>
<comment type="similarity">
    <text evidence="1">Belongs to the eukaryotic ribosomal protein eL40 family.</text>
</comment>
<feature type="chain" id="PRO_0000138783" description="Large ribosomal subunit protein eL40">
    <location>
        <begin position="1"/>
        <end position="47"/>
    </location>
</feature>
<proteinExistence type="inferred from homology"/>
<evidence type="ECO:0000255" key="1">
    <source>
        <dbReference type="HAMAP-Rule" id="MF_00788"/>
    </source>
</evidence>
<evidence type="ECO:0000305" key="2"/>
<dbReference type="EMBL" id="BX950229">
    <property type="protein sequence ID" value="CAF29707.1"/>
    <property type="molecule type" value="Genomic_DNA"/>
</dbReference>
<dbReference type="RefSeq" id="WP_011170095.1">
    <property type="nucleotide sequence ID" value="NC_005791.1"/>
</dbReference>
<dbReference type="SMR" id="P62026"/>
<dbReference type="STRING" id="267377.MMP0151"/>
<dbReference type="EnsemblBacteria" id="CAF29707">
    <property type="protein sequence ID" value="CAF29707"/>
    <property type="gene ID" value="MMP0151"/>
</dbReference>
<dbReference type="KEGG" id="mmp:MMP0151"/>
<dbReference type="PATRIC" id="fig|267377.15.peg.154"/>
<dbReference type="eggNOG" id="arCOG04049">
    <property type="taxonomic scope" value="Archaea"/>
</dbReference>
<dbReference type="HOGENOM" id="CLU_205640_0_0_2"/>
<dbReference type="OrthoDB" id="45138at2157"/>
<dbReference type="Proteomes" id="UP000000590">
    <property type="component" value="Chromosome"/>
</dbReference>
<dbReference type="GO" id="GO:1990904">
    <property type="term" value="C:ribonucleoprotein complex"/>
    <property type="evidence" value="ECO:0007669"/>
    <property type="project" value="UniProtKB-KW"/>
</dbReference>
<dbReference type="GO" id="GO:0005840">
    <property type="term" value="C:ribosome"/>
    <property type="evidence" value="ECO:0007669"/>
    <property type="project" value="UniProtKB-KW"/>
</dbReference>
<dbReference type="GO" id="GO:0003735">
    <property type="term" value="F:structural constituent of ribosome"/>
    <property type="evidence" value="ECO:0007669"/>
    <property type="project" value="InterPro"/>
</dbReference>
<dbReference type="GO" id="GO:0006412">
    <property type="term" value="P:translation"/>
    <property type="evidence" value="ECO:0007669"/>
    <property type="project" value="UniProtKB-UniRule"/>
</dbReference>
<dbReference type="Gene3D" id="4.10.1060.50">
    <property type="match status" value="1"/>
</dbReference>
<dbReference type="HAMAP" id="MF_00788">
    <property type="entry name" value="Ribosomal_eL40"/>
    <property type="match status" value="1"/>
</dbReference>
<dbReference type="InterPro" id="IPR023657">
    <property type="entry name" value="Ribosomal_eL40_arc"/>
</dbReference>
<dbReference type="InterPro" id="IPR001975">
    <property type="entry name" value="Ribosomal_eL40_dom"/>
</dbReference>
<dbReference type="InterPro" id="IPR038587">
    <property type="entry name" value="Ribosomal_eL40_sf"/>
</dbReference>
<dbReference type="InterPro" id="IPR011332">
    <property type="entry name" value="Ribosomal_zn-bd"/>
</dbReference>
<dbReference type="NCBIfam" id="NF003161">
    <property type="entry name" value="PRK04136.1"/>
    <property type="match status" value="1"/>
</dbReference>
<dbReference type="PANTHER" id="PTHR39649">
    <property type="entry name" value="50S RIBOSOMAL PROTEIN L40E"/>
    <property type="match status" value="1"/>
</dbReference>
<dbReference type="PANTHER" id="PTHR39649:SF1">
    <property type="entry name" value="LARGE RIBOSOMAL SUBUNIT PROTEIN EL40"/>
    <property type="match status" value="1"/>
</dbReference>
<dbReference type="Pfam" id="PF01020">
    <property type="entry name" value="Ribosomal_L40e"/>
    <property type="match status" value="1"/>
</dbReference>
<dbReference type="SMART" id="SM01377">
    <property type="entry name" value="Ribosomal_L40e"/>
    <property type="match status" value="1"/>
</dbReference>
<dbReference type="SUPFAM" id="SSF57829">
    <property type="entry name" value="Zn-binding ribosomal proteins"/>
    <property type="match status" value="1"/>
</dbReference>
<keyword id="KW-1185">Reference proteome</keyword>
<keyword id="KW-0687">Ribonucleoprotein</keyword>
<keyword id="KW-0689">Ribosomal protein</keyword>
<accession>P62026</accession>
<name>RL40_METMP</name>
<organism>
    <name type="scientific">Methanococcus maripaludis (strain DSM 14266 / JCM 13030 / NBRC 101832 / S2 / LL)</name>
    <dbReference type="NCBI Taxonomy" id="267377"/>
    <lineage>
        <taxon>Archaea</taxon>
        <taxon>Methanobacteriati</taxon>
        <taxon>Methanobacteriota</taxon>
        <taxon>Methanomada group</taxon>
        <taxon>Methanococci</taxon>
        <taxon>Methanococcales</taxon>
        <taxon>Methanococcaceae</taxon>
        <taxon>Methanococcus</taxon>
    </lineage>
</organism>
<reference key="1">
    <citation type="journal article" date="2004" name="J. Bacteriol.">
        <title>Complete genome sequence of the genetically tractable hydrogenotrophic methanogen Methanococcus maripaludis.</title>
        <authorList>
            <person name="Hendrickson E.L."/>
            <person name="Kaul R."/>
            <person name="Zhou Y."/>
            <person name="Bovee D."/>
            <person name="Chapman P."/>
            <person name="Chung J."/>
            <person name="Conway de Macario E."/>
            <person name="Dodsworth J.A."/>
            <person name="Gillett W."/>
            <person name="Graham D.E."/>
            <person name="Hackett M."/>
            <person name="Haydock A.K."/>
            <person name="Kang A."/>
            <person name="Land M.L."/>
            <person name="Levy R."/>
            <person name="Lie T.J."/>
            <person name="Major T.A."/>
            <person name="Moore B.C."/>
            <person name="Porat I."/>
            <person name="Palmeiri A."/>
            <person name="Rouse G."/>
            <person name="Saenphimmachak C."/>
            <person name="Soell D."/>
            <person name="Van Dien S."/>
            <person name="Wang T."/>
            <person name="Whitman W.B."/>
            <person name="Xia Q."/>
            <person name="Zhang Y."/>
            <person name="Larimer F.W."/>
            <person name="Olson M.V."/>
            <person name="Leigh J.A."/>
        </authorList>
    </citation>
    <scope>NUCLEOTIDE SEQUENCE [LARGE SCALE GENOMIC DNA]</scope>
    <source>
        <strain>DSM 14266 / JCM 13030 / NBRC 101832 / S2 / LL</strain>
    </source>
</reference>